<keyword id="KW-0002">3D-structure</keyword>
<keyword id="KW-0025">Alternative splicing</keyword>
<keyword id="KW-0160">Chromosomal rearrangement</keyword>
<keyword id="KW-0238">DNA-binding</keyword>
<keyword id="KW-0479">Metal-binding</keyword>
<keyword id="KW-0539">Nucleus</keyword>
<keyword id="KW-1267">Proteomics identification</keyword>
<keyword id="KW-0656">Proto-oncogene</keyword>
<keyword id="KW-0675">Receptor</keyword>
<keyword id="KW-1185">Reference proteome</keyword>
<keyword id="KW-0804">Transcription</keyword>
<keyword id="KW-0805">Transcription regulation</keyword>
<keyword id="KW-0862">Zinc</keyword>
<keyword id="KW-0863">Zinc-finger</keyword>
<organism>
    <name type="scientific">Homo sapiens</name>
    <name type="common">Human</name>
    <dbReference type="NCBI Taxonomy" id="9606"/>
    <lineage>
        <taxon>Eukaryota</taxon>
        <taxon>Metazoa</taxon>
        <taxon>Chordata</taxon>
        <taxon>Craniata</taxon>
        <taxon>Vertebrata</taxon>
        <taxon>Euteleostomi</taxon>
        <taxon>Mammalia</taxon>
        <taxon>Eutheria</taxon>
        <taxon>Euarchontoglires</taxon>
        <taxon>Primates</taxon>
        <taxon>Haplorrhini</taxon>
        <taxon>Catarrhini</taxon>
        <taxon>Hominidae</taxon>
        <taxon>Homo</taxon>
    </lineage>
</organism>
<evidence type="ECO:0000250" key="1">
    <source>
        <dbReference type="UniProtKB" id="P51179"/>
    </source>
</evidence>
<evidence type="ECO:0000250" key="2">
    <source>
        <dbReference type="UniProtKB" id="Q9QZB6"/>
    </source>
</evidence>
<evidence type="ECO:0000255" key="3">
    <source>
        <dbReference type="PROSITE-ProRule" id="PRU00407"/>
    </source>
</evidence>
<evidence type="ECO:0000255" key="4">
    <source>
        <dbReference type="PROSITE-ProRule" id="PRU01189"/>
    </source>
</evidence>
<evidence type="ECO:0000256" key="5">
    <source>
        <dbReference type="SAM" id="MobiDB-lite"/>
    </source>
</evidence>
<evidence type="ECO:0000269" key="6">
    <source>
    </source>
</evidence>
<evidence type="ECO:0000269" key="7">
    <source>
    </source>
</evidence>
<evidence type="ECO:0000269" key="8">
    <source>
    </source>
</evidence>
<evidence type="ECO:0000269" key="9">
    <source>
    </source>
</evidence>
<evidence type="ECO:0000303" key="10">
    <source>
    </source>
</evidence>
<evidence type="ECO:0000303" key="11">
    <source>
    </source>
</evidence>
<evidence type="ECO:0000305" key="12"/>
<reference key="1">
    <citation type="journal article" date="1996" name="Biochim. Biophys. Acta">
        <title>Structure, mapping and expression of a human NOR-1 gene, the third member of the Nur77/NGFI-B family.</title>
        <authorList>
            <person name="Ohkura N."/>
            <person name="Ito M."/>
            <person name="Tsukada T."/>
            <person name="Sasaki K."/>
            <person name="Yamaguchi K."/>
            <person name="Miki K."/>
        </authorList>
    </citation>
    <scope>NUCLEOTIDE SEQUENCE [MRNA] (ISOFORM ALPHA)</scope>
    <source>
        <tissue>Fetal brain</tissue>
    </source>
</reference>
<reference key="2">
    <citation type="journal article" date="1995" name="Mol. Endocrinol.">
        <title>The isolation and characterization of MINOR, a novel mitogen-inducible nuclear orphan receptor.</title>
        <authorList>
            <person name="Hedvat C.V."/>
            <person name="Irving S.G."/>
        </authorList>
    </citation>
    <scope>NUCLEOTIDE SEQUENCE [MRNA] (ISOFORM ALPHA)</scope>
    <source>
        <tissue>Peripheral blood</tissue>
    </source>
</reference>
<reference key="3">
    <citation type="journal article" date="1996" name="Oncogene">
        <title>Fusion of the EWS gene to CHN, a member of the steroid/thyroid receptor gene superfamily, in a human myxoid chondrosarcoma.</title>
        <authorList>
            <person name="Clark J."/>
            <person name="Benjamin H."/>
            <person name="Gill S."/>
            <person name="Sidhar S."/>
            <person name="Goodwin G."/>
            <person name="Crew J."/>
            <person name="Gusterson B.A."/>
            <person name="Shipley J."/>
            <person name="Cooper C.S."/>
        </authorList>
    </citation>
    <scope>NUCLEOTIDE SEQUENCE [MRNA] (ISOFORM ALPHA)</scope>
    <source>
        <tissue>Fetal brain</tissue>
    </source>
</reference>
<reference key="4">
    <citation type="journal article" date="1995" name="Hum. Mol. Genet.">
        <title>Oncogenic conversion of a novel orphan nuclear receptor by chromosome translocation.</title>
        <authorList>
            <person name="Labelle Y."/>
            <person name="Zucman J."/>
            <person name="Stenman G."/>
            <person name="Kindblom L.-G."/>
            <person name="Knight J."/>
            <person name="Turc-Carel C."/>
            <person name="Dockhorn-Dworniczak B."/>
            <person name="Mandahl N."/>
            <person name="Desmaze C."/>
            <person name="Peter M."/>
            <person name="Aurias A."/>
            <person name="Delattre O."/>
            <person name="Thomas G."/>
        </authorList>
    </citation>
    <scope>NUCLEOTIDE SEQUENCE [MRNA] (ISOFORM BETA)</scope>
    <scope>CHROMOSOMAL TRANSLOCATION WITH EWS</scope>
    <source>
        <tissue>Fetal heart</tissue>
    </source>
</reference>
<reference key="5">
    <citation type="journal article" date="2004" name="Nature">
        <title>DNA sequence and analysis of human chromosome 9.</title>
        <authorList>
            <person name="Humphray S.J."/>
            <person name="Oliver K."/>
            <person name="Hunt A.R."/>
            <person name="Plumb R.W."/>
            <person name="Loveland J.E."/>
            <person name="Howe K.L."/>
            <person name="Andrews T.D."/>
            <person name="Searle S."/>
            <person name="Hunt S.E."/>
            <person name="Scott C.E."/>
            <person name="Jones M.C."/>
            <person name="Ainscough R."/>
            <person name="Almeida J.P."/>
            <person name="Ambrose K.D."/>
            <person name="Ashwell R.I.S."/>
            <person name="Babbage A.K."/>
            <person name="Babbage S."/>
            <person name="Bagguley C.L."/>
            <person name="Bailey J."/>
            <person name="Banerjee R."/>
            <person name="Barker D.J."/>
            <person name="Barlow K.F."/>
            <person name="Bates K."/>
            <person name="Beasley H."/>
            <person name="Beasley O."/>
            <person name="Bird C.P."/>
            <person name="Bray-Allen S."/>
            <person name="Brown A.J."/>
            <person name="Brown J.Y."/>
            <person name="Burford D."/>
            <person name="Burrill W."/>
            <person name="Burton J."/>
            <person name="Carder C."/>
            <person name="Carter N.P."/>
            <person name="Chapman J.C."/>
            <person name="Chen Y."/>
            <person name="Clarke G."/>
            <person name="Clark S.Y."/>
            <person name="Clee C.M."/>
            <person name="Clegg S."/>
            <person name="Collier R.E."/>
            <person name="Corby N."/>
            <person name="Crosier M."/>
            <person name="Cummings A.T."/>
            <person name="Davies J."/>
            <person name="Dhami P."/>
            <person name="Dunn M."/>
            <person name="Dutta I."/>
            <person name="Dyer L.W."/>
            <person name="Earthrowl M.E."/>
            <person name="Faulkner L."/>
            <person name="Fleming C.J."/>
            <person name="Frankish A."/>
            <person name="Frankland J.A."/>
            <person name="French L."/>
            <person name="Fricker D.G."/>
            <person name="Garner P."/>
            <person name="Garnett J."/>
            <person name="Ghori J."/>
            <person name="Gilbert J.G.R."/>
            <person name="Glison C."/>
            <person name="Grafham D.V."/>
            <person name="Gribble S."/>
            <person name="Griffiths C."/>
            <person name="Griffiths-Jones S."/>
            <person name="Grocock R."/>
            <person name="Guy J."/>
            <person name="Hall R.E."/>
            <person name="Hammond S."/>
            <person name="Harley J.L."/>
            <person name="Harrison E.S.I."/>
            <person name="Hart E.A."/>
            <person name="Heath P.D."/>
            <person name="Henderson C.D."/>
            <person name="Hopkins B.L."/>
            <person name="Howard P.J."/>
            <person name="Howden P.J."/>
            <person name="Huckle E."/>
            <person name="Johnson C."/>
            <person name="Johnson D."/>
            <person name="Joy A.A."/>
            <person name="Kay M."/>
            <person name="Keenan S."/>
            <person name="Kershaw J.K."/>
            <person name="Kimberley A.M."/>
            <person name="King A."/>
            <person name="Knights A."/>
            <person name="Laird G.K."/>
            <person name="Langford C."/>
            <person name="Lawlor S."/>
            <person name="Leongamornlert D.A."/>
            <person name="Leversha M."/>
            <person name="Lloyd C."/>
            <person name="Lloyd D.M."/>
            <person name="Lovell J."/>
            <person name="Martin S."/>
            <person name="Mashreghi-Mohammadi M."/>
            <person name="Matthews L."/>
            <person name="McLaren S."/>
            <person name="McLay K.E."/>
            <person name="McMurray A."/>
            <person name="Milne S."/>
            <person name="Nickerson T."/>
            <person name="Nisbett J."/>
            <person name="Nordsiek G."/>
            <person name="Pearce A.V."/>
            <person name="Peck A.I."/>
            <person name="Porter K.M."/>
            <person name="Pandian R."/>
            <person name="Pelan S."/>
            <person name="Phillimore B."/>
            <person name="Povey S."/>
            <person name="Ramsey Y."/>
            <person name="Rand V."/>
            <person name="Scharfe M."/>
            <person name="Sehra H.K."/>
            <person name="Shownkeen R."/>
            <person name="Sims S.K."/>
            <person name="Skuce C.D."/>
            <person name="Smith M."/>
            <person name="Steward C.A."/>
            <person name="Swarbreck D."/>
            <person name="Sycamore N."/>
            <person name="Tester J."/>
            <person name="Thorpe A."/>
            <person name="Tracey A."/>
            <person name="Tromans A."/>
            <person name="Thomas D.W."/>
            <person name="Wall M."/>
            <person name="Wallis J.M."/>
            <person name="West A.P."/>
            <person name="Whitehead S.L."/>
            <person name="Willey D.L."/>
            <person name="Williams S.A."/>
            <person name="Wilming L."/>
            <person name="Wray P.W."/>
            <person name="Young L."/>
            <person name="Ashurst J.L."/>
            <person name="Coulson A."/>
            <person name="Blocker H."/>
            <person name="Durbin R.M."/>
            <person name="Sulston J.E."/>
            <person name="Hubbard T."/>
            <person name="Jackson M.J."/>
            <person name="Bentley D.R."/>
            <person name="Beck S."/>
            <person name="Rogers J."/>
            <person name="Dunham I."/>
        </authorList>
    </citation>
    <scope>NUCLEOTIDE SEQUENCE [LARGE SCALE GENOMIC DNA]</scope>
</reference>
<reference key="6">
    <citation type="submission" date="2009-01" db="EMBL/GenBank/DDBJ databases">
        <authorList>
            <person name="Mural R.J."/>
            <person name="Istrail S."/>
            <person name="Sutton G.G."/>
            <person name="Florea L."/>
            <person name="Halpern A.L."/>
            <person name="Mobarry C.M."/>
            <person name="Lippert R."/>
            <person name="Walenz B."/>
            <person name="Shatkay H."/>
            <person name="Dew I."/>
            <person name="Miller J.R."/>
            <person name="Flanigan M.J."/>
            <person name="Edwards N.J."/>
            <person name="Bolanos R."/>
            <person name="Fasulo D."/>
            <person name="Halldorsson B.V."/>
            <person name="Hannenhalli S."/>
            <person name="Turner R."/>
            <person name="Yooseph S."/>
            <person name="Lu F."/>
            <person name="Nusskern D.R."/>
            <person name="Shue B.C."/>
            <person name="Zheng X.H."/>
            <person name="Zhong F."/>
            <person name="Delcher A.L."/>
            <person name="Huson D.H."/>
            <person name="Kravitz S.A."/>
            <person name="Mouchard L."/>
            <person name="Reinert K."/>
            <person name="Remington K.A."/>
            <person name="Clark A.G."/>
            <person name="Waterman M.S."/>
            <person name="Eichler E.E."/>
            <person name="Adams M.D."/>
            <person name="Hunkapiller M.W."/>
            <person name="Myers E.W."/>
            <person name="Venter J.C."/>
        </authorList>
    </citation>
    <scope>NUCLEOTIDE SEQUENCE [LARGE SCALE GENOMIC DNA]</scope>
    <scope>ALTERNATIVE SPLICING (ISOFORM 3)</scope>
</reference>
<reference key="7">
    <citation type="journal article" date="1998" name="Gene">
        <title>Alternative splicing generates isoforms of human neuron-derived orphan receptor-1 (NOR-1) mRNA.</title>
        <authorList>
            <person name="Ohkura N."/>
            <person name="Ito M."/>
            <person name="Tsukada T."/>
            <person name="Sasaki K."/>
            <person name="Yamaguchi K."/>
            <person name="Miki K."/>
        </authorList>
    </citation>
    <scope>NUCLEOTIDE SEQUENCE [MRNA] OF 1-69 AND 301-443 (ISOFORM BETA)</scope>
    <scope>ALTERNATIVE SPLICING</scope>
    <source>
        <tissue>Skeletal muscle</tissue>
    </source>
</reference>
<reference key="8">
    <citation type="journal article" date="2003" name="Cancer Res.">
        <title>The homeotic protein Six3 is a coactivator of the nuclear receptor NOR-1 and a corepressor of the fusion protein EWS/NOR-1 in human extraskeletal myxoid chondrosarcomas.</title>
        <authorList>
            <person name="Laflamme C."/>
            <person name="Filion C."/>
            <person name="Bridge J.A."/>
            <person name="Ladanyi M."/>
            <person name="Goldring M.B."/>
            <person name="Labelle Y."/>
        </authorList>
    </citation>
    <scope>INTERACTION WITH SIX3</scope>
</reference>
<reference key="9">
    <citation type="journal article" date="2010" name="Circ. Res.">
        <title>Deficiency of the NR4A orphan nuclear receptor NOR1 decreases monocyte adhesion and atherosclerosis.</title>
        <authorList>
            <person name="Zhao Y."/>
            <person name="Howatt D.A."/>
            <person name="Gizard F."/>
            <person name="Nomiyama T."/>
            <person name="Findeisen H.M."/>
            <person name="Heywood E.B."/>
            <person name="Jones K.L."/>
            <person name="Conneely O.M."/>
            <person name="Daugherty A."/>
            <person name="Bruemmer D."/>
        </authorList>
    </citation>
    <scope>FUNCTION</scope>
    <scope>INDUCTION</scope>
</reference>
<reference key="10">
    <citation type="journal article" date="2013" name="Am. J. Physiol.">
        <title>6-Mercaptopurine augments glucose transport activity in skeletal muscle cells in part via a mechanism dependent upon orphan nuclear receptor NR4A3.</title>
        <authorList>
            <person name="Liu Q."/>
            <person name="Zhu X."/>
            <person name="Xu L."/>
            <person name="Fu Y."/>
            <person name="Garvey W.T."/>
        </authorList>
    </citation>
    <scope>FUNCTION</scope>
</reference>
<reference key="11">
    <citation type="journal article" date="2015" name="Cardiovasc. Res.">
        <title>DNA-dependent protein kinase (DNA-PK) permits vascular smooth muscle cell proliferation through phosphorylation of the orphan nuclear receptor NOR1.</title>
        <authorList>
            <person name="Medunjanin S."/>
            <person name="Daniel J.M."/>
            <person name="Weinert S."/>
            <person name="Dutzmann J."/>
            <person name="Burgbacher F."/>
            <person name="Brecht S."/>
            <person name="Bruemmer D."/>
            <person name="Kaehne T."/>
            <person name="Naumann M."/>
            <person name="Sedding D.G."/>
            <person name="Zuschratter W."/>
            <person name="Braun-Dullaeus R.C."/>
        </authorList>
    </citation>
    <scope>INTERACTION WITH PRKDC; XRCC6 AND XRCC5</scope>
    <scope>PHOSPHORYLATION</scope>
</reference>
<protein>
    <recommendedName>
        <fullName>Nuclear receptor subfamily 4 group A member 3</fullName>
    </recommendedName>
    <alternativeName>
        <fullName>Mitogen-induced nuclear orphan receptor</fullName>
    </alternativeName>
    <alternativeName>
        <fullName>Neuron-derived orphan receptor 1</fullName>
    </alternativeName>
    <alternativeName>
        <fullName>Nuclear hormone receptor NOR-1</fullName>
    </alternativeName>
    <alternativeName>
        <fullName evidence="10">Translocated in extraskeletal chondrosarcoma</fullName>
    </alternativeName>
</protein>
<comment type="function">
    <text evidence="1 2 7 8">Transcriptional activator that binds to regulatory elements in promoter regions in a cell- and response element (target)-specific manner. Induces gene expression by binding as monomers to the NR4A1 response element (NBRE) 5'-AAAAGGTCA-3' site and as homodimers to the Nur response element (NurRE) site in the promoter of their regulated target genes (By similarity). Plays a role in the regulation of proliferation, survival and differentiation of many different cell types and also in metabolism and inflammation. Mediates proliferation of vascular smooth muscle, myeloid progenitor cell and type B pancreatic cells; promotes mitogen-induced vascular smooth muscle cell proliferation through transactivation of SKP2 promoter by binding a NBRE site (By similarity). Upon PDGF stimulation, stimulates vascular smooth muscle cell proliferation by regulating CCND1 and CCND2 expression. In islets, induces type B pancreatic cell proliferation through up-regulation of genes that activate cell cycle, as well as genes that cause degradation of the CDKN1A (By similarity). Negatively regulates myeloid progenitor cell proliferation by repressing RUNX1 in a NBRE site-independent manner. During inner ear, plays a role as a key mediator of the proliferative growth phase of semicircular canal development (By similarity). Also mediates survival of neuron and smooth muscle cells; mediates CREB-induced neuronal survival, and during hippocampus development, plays a critical role in pyramidal cell survival and axonal guidance. Is required for S phase entry of the cell cycle and survival of smooth muscle cells by inducing CCND1, resulting in RB1 phosphorylation. Binds to NBRE motif in CCND1 promoter, resulting in the activation of the promoter and CCND1 transcription (By similarity). Also plays a role in inflammation; upon TNF stimulation, mediates monocyte adhesion by inducing the expression of VCAM1 and ICAM1 by binding to the NBRE consensus site (By similarity) (PubMed:20558821). In mast cells activated by Fc-epsilon receptor cross-linking, promotes the synthesis and release of cytokines but impairs events leading to degranulation (By similarity). Also plays a role in metabolism; by modulating feeding behavior; and by playing a role in energy balance by inhibiting the glucocorticoid-induced orexigenic neuropeptides AGRP expression, at least in part by forming a complex with activated NR3C1 on the AGRP- glucocorticoid response element (GRE), and thus weakening the DNA binding activity of NR3C1. Upon catecholamines stimulation, regulates gene expression that controls oxidative metabolism in skeletal muscle (By similarity). Plays a role in glucose transport by regulating translocation of the SLC2A4 glucose transporter to the cell surface (PubMed:24022864). Finally, during gastrulation plays a crucial role in the formation of anterior mesoderm by controlling cell migration. Inhibits adipogenesis (By similarity). Also participates in cardiac hypertrophy by activating PARP1 (By similarity).</text>
</comment>
<comment type="subunit">
    <text evidence="1 2 6 9">Interacts with SIX3 (via homeobox); differentially regulates the transcriptional activities of NR4A3 (PubMed:12543801). Interacts with the constituents of DNA-PK heterotrimer PRKDC, XRCC6 and XRCC5; phosphorylates and prevents NR4A3 ubiquitinylation and degradation (PubMed:25852083). Interacts with NCOA2; potentiates the activity of the NR4A3. Interacts with NCOA1, NCOA3, MED1 and KAT2B. Interacts with EP300 and NCOA2; mediates the recruitment of MED1 in the coactivator complex (By similarity). Interacts with NR3C1 (via nuclear receptor DNA-binding domain); the interactions represses transcription activity of NR4A3 on the POMC promoter Nur response element (NurRE). Interacts with TRIM28; the interactions potentiates NR4A3 activity on NurRE promoter. Binds DNA as a monomer and homodimer. Interacts with PARP1; activates PARP1 by improving acetylation of PARP1 and suppressing the interaction between PARP1 and SIRT1 (By similarity).</text>
</comment>
<comment type="interaction">
    <interactant intactId="EBI-13644623">
        <id>Q92570</id>
    </interactant>
    <interactant intactId="EBI-10173507">
        <id>Q6UY14-3</id>
        <label>ADAMTSL4</label>
    </interactant>
    <organismsDiffer>false</organismsDiffer>
    <experiments>3</experiments>
</comment>
<comment type="interaction">
    <interactant intactId="EBI-13644623">
        <id>Q92570</id>
    </interactant>
    <interactant intactId="EBI-1211484">
        <id>P05187</id>
        <label>ALPP</label>
    </interactant>
    <organismsDiffer>false</organismsDiffer>
    <experiments>3</experiments>
</comment>
<comment type="interaction">
    <interactant intactId="EBI-13644623">
        <id>Q92570</id>
    </interactant>
    <interactant intactId="EBI-745859">
        <id>P55273</id>
        <label>CDKN2D</label>
    </interactant>
    <organismsDiffer>false</organismsDiffer>
    <experiments>3</experiments>
</comment>
<comment type="interaction">
    <interactant intactId="EBI-13644623">
        <id>Q92570</id>
    </interactant>
    <interactant intactId="EBI-947551">
        <id>Q9H2X0</id>
        <label>CHRD</label>
    </interactant>
    <organismsDiffer>false</organismsDiffer>
    <experiments>3</experiments>
</comment>
<comment type="interaction">
    <interactant intactId="EBI-13644623">
        <id>Q92570</id>
    </interactant>
    <interactant intactId="EBI-14156412">
        <id>Q08AG9</id>
        <label>CYP21A2</label>
    </interactant>
    <organismsDiffer>false</organismsDiffer>
    <experiments>3</experiments>
</comment>
<comment type="interaction">
    <interactant intactId="EBI-13644623">
        <id>Q92570</id>
    </interactant>
    <interactant intactId="EBI-3867333">
        <id>A8MQ03</id>
        <label>CYSRT1</label>
    </interactant>
    <organismsDiffer>false</organismsDiffer>
    <experiments>3</experiments>
</comment>
<comment type="interaction">
    <interactant intactId="EBI-13644623">
        <id>Q92570</id>
    </interactant>
    <interactant intactId="EBI-536772">
        <id>Q12805</id>
        <label>EFEMP1</label>
    </interactant>
    <organismsDiffer>false</organismsDiffer>
    <experiments>3</experiments>
</comment>
<comment type="interaction">
    <interactant intactId="EBI-13644623">
        <id>Q92570</id>
    </interactant>
    <interactant intactId="EBI-3918847">
        <id>Q9H2F3</id>
        <label>HSD3B7</label>
    </interactant>
    <organismsDiffer>false</organismsDiffer>
    <experiments>3</experiments>
</comment>
<comment type="interaction">
    <interactant intactId="EBI-13644623">
        <id>Q92570</id>
    </interactant>
    <interactant intactId="EBI-10981970">
        <id>Q5T749</id>
        <label>KPRP</label>
    </interactant>
    <organismsDiffer>false</organismsDiffer>
    <experiments>3</experiments>
</comment>
<comment type="interaction">
    <interactant intactId="EBI-13644623">
        <id>Q92570</id>
    </interactant>
    <interactant intactId="EBI-10172150">
        <id>P60370</id>
        <label>KRTAP10-5</label>
    </interactant>
    <organismsDiffer>false</organismsDiffer>
    <experiments>5</experiments>
</comment>
<comment type="interaction">
    <interactant intactId="EBI-13644623">
        <id>Q92570</id>
    </interactant>
    <interactant intactId="EBI-10171774">
        <id>P60410</id>
        <label>KRTAP10-8</label>
    </interactant>
    <organismsDiffer>false</organismsDiffer>
    <experiments>3</experiments>
</comment>
<comment type="interaction">
    <interactant intactId="EBI-13644623">
        <id>Q92570</id>
    </interactant>
    <interactant intactId="EBI-11953334">
        <id>P60328</id>
        <label>KRTAP12-3</label>
    </interactant>
    <organismsDiffer>false</organismsDiffer>
    <experiments>3</experiments>
</comment>
<comment type="interaction">
    <interactant intactId="EBI-13644623">
        <id>Q92570</id>
    </interactant>
    <interactant intactId="EBI-10176396">
        <id>P60329</id>
        <label>KRTAP12-4</label>
    </interactant>
    <organismsDiffer>false</organismsDiffer>
    <experiments>3</experiments>
</comment>
<comment type="interaction">
    <interactant intactId="EBI-13644623">
        <id>Q92570</id>
    </interactant>
    <interactant intactId="EBI-10302392">
        <id>Q9BYQ6</id>
        <label>KRTAP4-11</label>
    </interactant>
    <organismsDiffer>false</organismsDiffer>
    <experiments>3</experiments>
</comment>
<comment type="interaction">
    <interactant intactId="EBI-13644623">
        <id>Q92570</id>
    </interactant>
    <interactant intactId="EBI-10172511">
        <id>Q9BYR5</id>
        <label>KRTAP4-2</label>
    </interactant>
    <organismsDiffer>false</organismsDiffer>
    <experiments>3</experiments>
</comment>
<comment type="interaction">
    <interactant intactId="EBI-13644623">
        <id>Q92570</id>
    </interactant>
    <interactant intactId="EBI-11958132">
        <id>Q9BYR3</id>
        <label>KRTAP4-4</label>
    </interactant>
    <organismsDiffer>false</organismsDiffer>
    <experiments>3</experiments>
</comment>
<comment type="interaction">
    <interactant intactId="EBI-13644623">
        <id>Q92570</id>
    </interactant>
    <interactant intactId="EBI-11993296">
        <id>Q6L8G4</id>
        <label>KRTAP5-11</label>
    </interactant>
    <organismsDiffer>false</organismsDiffer>
    <experiments>3</experiments>
</comment>
<comment type="interaction">
    <interactant intactId="EBI-13644623">
        <id>Q92570</id>
    </interactant>
    <interactant intactId="EBI-11974251">
        <id>Q6L8H2</id>
        <label>KRTAP5-3</label>
    </interactant>
    <organismsDiffer>false</organismsDiffer>
    <experiments>3</experiments>
</comment>
<comment type="interaction">
    <interactant intactId="EBI-13644623">
        <id>Q92570</id>
    </interactant>
    <interactant intactId="EBI-10250562">
        <id>Q6L8G9</id>
        <label>KRTAP5-6</label>
    </interactant>
    <organismsDiffer>false</organismsDiffer>
    <experiments>3</experiments>
</comment>
<comment type="interaction">
    <interactant intactId="EBI-13644623">
        <id>Q92570</id>
    </interactant>
    <interactant intactId="EBI-3958099">
        <id>P26371</id>
        <label>KRTAP5-9</label>
    </interactant>
    <organismsDiffer>false</organismsDiffer>
    <experiments>3</experiments>
</comment>
<comment type="interaction">
    <interactant intactId="EBI-13644623">
        <id>Q92570</id>
    </interactant>
    <interactant intactId="EBI-22311199">
        <id>Q3LI67</id>
        <label>KRTAP6-3</label>
    </interactant>
    <organismsDiffer>false</organismsDiffer>
    <experiments>3</experiments>
</comment>
<comment type="interaction">
    <interactant intactId="EBI-13644623">
        <id>Q92570</id>
    </interactant>
    <interactant intactId="EBI-1044640">
        <id>Q9BYQ4</id>
        <label>KRTAP9-2</label>
    </interactant>
    <organismsDiffer>false</organismsDiffer>
    <experiments>3</experiments>
</comment>
<comment type="interaction">
    <interactant intactId="EBI-13644623">
        <id>Q92570</id>
    </interactant>
    <interactant intactId="EBI-1043191">
        <id>Q9BYQ3</id>
        <label>KRTAP9-3</label>
    </interactant>
    <organismsDiffer>false</organismsDiffer>
    <experiments>3</experiments>
</comment>
<comment type="interaction">
    <interactant intactId="EBI-13644623">
        <id>Q92570</id>
    </interactant>
    <interactant intactId="EBI-11958364">
        <id>Q9BYQ0</id>
        <label>KRTAP9-8</label>
    </interactant>
    <organismsDiffer>false</organismsDiffer>
    <experiments>3</experiments>
</comment>
<comment type="interaction">
    <interactant intactId="EBI-13644623">
        <id>Q92570</id>
    </interactant>
    <interactant intactId="EBI-11478468">
        <id>O14633</id>
        <label>LCE2B</label>
    </interactant>
    <organismsDiffer>false</organismsDiffer>
    <experiments>3</experiments>
</comment>
<comment type="interaction">
    <interactant intactId="EBI-13644623">
        <id>Q92570</id>
    </interactant>
    <interactant intactId="EBI-10246750">
        <id>Q5TA82</id>
        <label>LCE2D</label>
    </interactant>
    <organismsDiffer>false</organismsDiffer>
    <experiments>3</experiments>
</comment>
<comment type="interaction">
    <interactant intactId="EBI-13644623">
        <id>Q92570</id>
    </interactant>
    <interactant intactId="EBI-2683507">
        <id>Q8N5G2</id>
        <label>MACO1</label>
    </interactant>
    <organismsDiffer>false</organismsDiffer>
    <experiments>3</experiments>
</comment>
<comment type="interaction">
    <interactant intactId="EBI-13644623">
        <id>Q92570</id>
    </interactant>
    <interactant intactId="EBI-6979889">
        <id>Q92692-2</id>
        <label>NECTIN2</label>
    </interactant>
    <organismsDiffer>false</organismsDiffer>
    <experiments>3</experiments>
</comment>
<comment type="interaction">
    <interactant intactId="EBI-13644623">
        <id>Q92570</id>
    </interactant>
    <interactant intactId="EBI-11956269">
        <id>Q92824-2</id>
        <label>PCSK5</label>
    </interactant>
    <organismsDiffer>false</organismsDiffer>
    <experiments>3</experiments>
</comment>
<comment type="interaction">
    <interactant intactId="EBI-13644623">
        <id>Q92570</id>
    </interactant>
    <interactant intactId="EBI-714158">
        <id>Q13526</id>
        <label>PIN1</label>
    </interactant>
    <organismsDiffer>false</organismsDiffer>
    <experiments>3</experiments>
</comment>
<comment type="interaction">
    <interactant intactId="EBI-13644623">
        <id>Q92570</id>
    </interactant>
    <interactant intactId="EBI-10253121">
        <id>Q6P9E2</id>
        <label>RECK</label>
    </interactant>
    <organismsDiffer>false</organismsDiffer>
    <experiments>3</experiments>
</comment>
<comment type="interaction">
    <interactant intactId="EBI-13644623">
        <id>Q92570</id>
    </interactant>
    <interactant intactId="EBI-13644574">
        <id>O95343</id>
        <label>SIX3</label>
    </interactant>
    <organismsDiffer>false</organismsDiffer>
    <experiments>3</experiments>
</comment>
<comment type="interaction">
    <interactant intactId="EBI-13644623">
        <id>Q92570</id>
    </interactant>
    <interactant intactId="EBI-12162539">
        <id>Q9H4F8-2</id>
        <label>SMOC1</label>
    </interactant>
    <organismsDiffer>false</organismsDiffer>
    <experiments>3</experiments>
</comment>
<comment type="interaction">
    <interactant intactId="EBI-13644623">
        <id>Q92570</id>
    </interactant>
    <interactant intactId="EBI-8652667">
        <id>O14817</id>
        <label>TSPAN4</label>
    </interactant>
    <organismsDiffer>false</organismsDiffer>
    <experiments>3</experiments>
</comment>
<comment type="interaction">
    <interactant intactId="EBI-13644623">
        <id>Q92570</id>
    </interactant>
    <interactant intactId="EBI-11026619">
        <id>Q05086-3</id>
        <label>UBE3A</label>
    </interactant>
    <organismsDiffer>false</organismsDiffer>
    <experiments>3</experiments>
</comment>
<comment type="interaction">
    <interactant intactId="EBI-13644623">
        <id>Q92570</id>
    </interactant>
    <interactant intactId="EBI-10249550">
        <id>Q6EMK4</id>
        <label>VASN</label>
    </interactant>
    <organismsDiffer>false</organismsDiffer>
    <experiments>3</experiments>
</comment>
<comment type="interaction">
    <interactant intactId="EBI-13644623">
        <id>Q92570</id>
    </interactant>
    <interactant intactId="EBI-11747707">
        <id>B2RUY7</id>
        <label>VWC2L</label>
    </interactant>
    <organismsDiffer>false</organismsDiffer>
    <experiments>3</experiments>
</comment>
<comment type="interaction">
    <interactant intactId="EBI-13644623">
        <id>Q92570</id>
    </interactant>
    <interactant intactId="EBI-373456">
        <id>Q9Y3S2</id>
        <label>ZNF330</label>
    </interactant>
    <organismsDiffer>false</organismsDiffer>
    <experiments>3</experiments>
</comment>
<comment type="subcellular location">
    <subcellularLocation>
        <location evidence="3">Nucleus</location>
    </subcellularLocation>
</comment>
<comment type="alternative products">
    <event type="alternative splicing"/>
    <isoform>
        <id>Q92570-1</id>
        <name>Alpha</name>
        <sequence type="displayed"/>
    </isoform>
    <isoform>
        <id>Q92570-2</id>
        <name>Beta</name>
        <sequence type="described" ref="VSP_003712 VSP_003713"/>
    </isoform>
    <isoform>
        <id>Q92570-3</id>
        <name>3</name>
        <sequence type="described" ref="VSP_037877"/>
    </isoform>
</comment>
<comment type="tissue specificity">
    <text>Isoform alpha is highly expressed in skeletal muscle. Isoform beta is highly expressed in skeletal muscle and low expressed in fetal brain and placenta.</text>
</comment>
<comment type="induction">
    <text evidence="7">Induced by inflammatory stimuli in endothelial cells through an NF-kappa-B-dependent transactivation of the NR4A3 Promoter.</text>
</comment>
<comment type="domain">
    <text evidence="2">The AF-1 domain mediates transcription activation. The N-terminal region (1-292) directly interacts with the C-terminal LBD (380-627): the interaction is potentiated by AF-1-mediated recruitment of NCOA2.</text>
</comment>
<comment type="PTM">
    <text evidence="9">Phosphorylated by PRKDC.</text>
</comment>
<comment type="disease">
    <disease id="DI-02610">
        <name>Ewing sarcoma</name>
        <acronym>ES</acronym>
        <description>A highly malignant, metastatic, primitive small round cell tumor of bone and soft tissue that affects children and adolescents. It belongs to the Ewing sarcoma family of tumors, a group of morphologically heterogeneous neoplasms that share the same cytogenetic features. They are considered neural tumors derived from cells of the neural crest. Ewing sarcoma represents the less differentiated form of the tumors.</description>
        <dbReference type="MIM" id="612219"/>
    </disease>
    <text>The gene represented in this entry is involved in disease pathogenesis. A chromosomal aberration involving NR4A3 is found in patients with Erwing sarcoma. Translocation t(9;22)(q22-31;q11-12) with EWSR1.</text>
</comment>
<comment type="disease">
    <text>A chromosomal aberration involving NR4A3 is a cause of a form of extraskeletal myxoid chondrosarcomas (EMC). Translocation t(9;17)(q22;q11) with TAF2N.</text>
</comment>
<comment type="similarity">
    <text evidence="12">Belongs to the nuclear hormone receptor family. NR4 subfamily.</text>
</comment>
<comment type="sequence caution" evidence="12">
    <conflict type="frameshift">
        <sequence resource="EMBL-CDS" id="AAB02581"/>
    </conflict>
</comment>
<comment type="sequence caution" evidence="12">
    <conflict type="erroneous initiation">
        <sequence resource="EMBL-CDS" id="AAB36006"/>
    </conflict>
</comment>
<comment type="online information" name="Atlas of Genetics and Cytogenetics in Oncology and Haematology">
    <link uri="https://atlasgeneticsoncology.org/gene/75/TEC"/>
</comment>
<feature type="chain" id="PRO_0000053722" description="Nuclear receptor subfamily 4 group A member 3">
    <location>
        <begin position="1"/>
        <end position="626"/>
    </location>
</feature>
<feature type="domain" description="NR LBD" evidence="4">
    <location>
        <begin position="394"/>
        <end position="623"/>
    </location>
</feature>
<feature type="DNA-binding region" description="Nuclear receptor" evidence="3">
    <location>
        <begin position="289"/>
        <end position="364"/>
    </location>
</feature>
<feature type="zinc finger region" description="NR C4-type" evidence="3">
    <location>
        <begin position="292"/>
        <end position="312"/>
    </location>
</feature>
<feature type="zinc finger region" description="NR C4-type" evidence="3">
    <location>
        <begin position="328"/>
        <end position="352"/>
    </location>
</feature>
<feature type="region of interest" description="Interaction with NCOA1, NCOA2, NCOA3 and KAT2B" evidence="2">
    <location>
        <begin position="1"/>
        <end position="291"/>
    </location>
</feature>
<feature type="region of interest" description="Required for DNA-PK heterotrimer" evidence="9">
    <location>
        <begin position="1"/>
        <end position="138"/>
    </location>
</feature>
<feature type="region of interest" description="Activation function (AF)-1 domain" evidence="2">
    <location>
        <begin position="1"/>
        <end position="108"/>
    </location>
</feature>
<feature type="region of interest" description="Disordered" evidence="5">
    <location>
        <begin position="92"/>
        <end position="152"/>
    </location>
</feature>
<feature type="region of interest" description="Disordered" evidence="5">
    <location>
        <begin position="192"/>
        <end position="211"/>
    </location>
</feature>
<feature type="region of interest" description="Disordered" evidence="5">
    <location>
        <begin position="265"/>
        <end position="284"/>
    </location>
</feature>
<feature type="region of interest" description="Disordered" evidence="5">
    <location>
        <begin position="364"/>
        <end position="394"/>
    </location>
</feature>
<feature type="region of interest" description="Interaction with KAT2B" evidence="2">
    <location>
        <begin position="379"/>
        <end position="626"/>
    </location>
</feature>
<feature type="compositionally biased region" description="Basic residues" evidence="5">
    <location>
        <begin position="93"/>
        <end position="110"/>
    </location>
</feature>
<feature type="compositionally biased region" description="Pro residues" evidence="5">
    <location>
        <begin position="140"/>
        <end position="149"/>
    </location>
</feature>
<feature type="compositionally biased region" description="Pro residues" evidence="5">
    <location>
        <begin position="195"/>
        <end position="204"/>
    </location>
</feature>
<feature type="compositionally biased region" description="Low complexity" evidence="5">
    <location>
        <begin position="268"/>
        <end position="284"/>
    </location>
</feature>
<feature type="compositionally biased region" description="Low complexity" evidence="5">
    <location>
        <begin position="377"/>
        <end position="387"/>
    </location>
</feature>
<feature type="splice variant" id="VSP_037877" description="In isoform 3." evidence="12">
    <original>M</original>
    <variation>MHDSIRFGNVDM</variation>
    <location>
        <position position="1"/>
    </location>
</feature>
<feature type="splice variant" id="VSP_003712" description="In isoform Beta." evidence="10 11">
    <original>YCPTDQAAAGTDAEHVQQFYNLLTA</original>
    <variation>VSFMISCFQMNDQGLYLWLLVIRVD</variation>
    <location>
        <begin position="419"/>
        <end position="443"/>
    </location>
</feature>
<feature type="splice variant" id="VSP_003713" description="In isoform Beta." evidence="10 11">
    <location>
        <begin position="444"/>
        <end position="626"/>
    </location>
</feature>
<feature type="sequence conflict" description="In Ref. 1 and 2." evidence="12" ref="1 2">
    <original>S</original>
    <variation>G</variation>
    <location>
        <position position="240"/>
    </location>
</feature>
<feature type="sequence conflict" description="In Ref. 1; BAA11419." evidence="12" ref="1">
    <original>K</original>
    <variation>R</variation>
    <location>
        <position position="454"/>
    </location>
</feature>
<feature type="sequence conflict" description="In Ref. 1; BAA11419." evidence="12" ref="1">
    <original>T</original>
    <variation>N</variation>
    <location>
        <position position="579"/>
    </location>
</feature>
<feature type="sequence conflict" description="In Ref. 1; BAA11419." evidence="12" ref="1">
    <original>G</original>
    <variation>V</variation>
    <location>
        <position position="585"/>
    </location>
</feature>
<gene>
    <name type="primary">NR4A3</name>
    <name type="synonym">CHN</name>
    <name type="synonym">CSMF</name>
    <name type="synonym">MINOR</name>
    <name type="synonym">NOR1</name>
    <name evidence="10" type="synonym">TEC</name>
</gene>
<sequence length="626" mass="68230">MPCVQAQYSPSPPGSSYAAQTYSSEYTTEIMNPDYTKLTMDLGSTEITATATTSLPSISTFVEGYSSNYELKPSCVYQMQRPLIKVEEGRAPSYHHHHHHHHHHHHHHQQQHQQPSIPPASSPEDEVLPSTSMYFKQSPPSTPTTPAFPPQAGALWDEALPSAPGCIAPGPLLDPPMKAVPTVAGARFPLFHFKPSPPHPPAPSPAGGHHLGYDPTAAAALSLPLGAAAAAGSQAAALESHPYGLPLAKRAAPLAFPPLGLTPSPTASSLLGESPSLPSPPSRSSSSGEGTCAVCGDNAACQHYGVRTCEGCKGFFKRTVQKNAKYVCLANKNCPVDKRRRNRCQYCRFQKCLSVGMVKEVVRTDSLKGRRGRLPSKPKSPLQQEPSQPSPPSPPICMMNALVRALTDSTPRDLDYSRYCPTDQAAAGTDAEHVQQFYNLLTASIDVSRSWAEKIPGFTDLPKEDQTLLIESAFLELFVLRLSIRSNTAEDKFVFCNGLVLHRLQCLRGFGEWLDSIKDFSLNLQSLNLDIQALACLSALSMITERHGLKEPKRVEELCNKITSSLKDHQSKGQALEPTESKVLGALVELRKICTLGLQRIFYLKLEDLVSPPSIIDKLFLDTLPF</sequence>
<proteinExistence type="evidence at protein level"/>
<accession>Q92570</accession>
<accession>A2A3I7</accession>
<accession>Q12935</accession>
<accession>Q14979</accession>
<accession>Q16420</accession>
<accession>Q4VXA8</accession>
<accession>Q4VXA9</accession>
<accession>Q9UEK2</accession>
<accession>Q9UEK3</accession>
<dbReference type="EMBL" id="D78579">
    <property type="protein sequence ID" value="BAA11419.1"/>
    <property type="molecule type" value="mRNA"/>
</dbReference>
<dbReference type="EMBL" id="U12767">
    <property type="protein sequence ID" value="AAB02581.1"/>
    <property type="status" value="ALT_FRAME"/>
    <property type="molecule type" value="mRNA"/>
</dbReference>
<dbReference type="EMBL" id="S81243">
    <property type="protein sequence ID" value="AAB36006.1"/>
    <property type="status" value="ALT_INIT"/>
    <property type="molecule type" value="mRNA"/>
</dbReference>
<dbReference type="EMBL" id="X89894">
    <property type="protein sequence ID" value="CAA61984.1"/>
    <property type="molecule type" value="mRNA"/>
</dbReference>
<dbReference type="EMBL" id="AL359710">
    <property type="status" value="NOT_ANNOTATED_CDS"/>
    <property type="molecule type" value="Genomic_DNA"/>
</dbReference>
<dbReference type="EMBL" id="AL358937">
    <property type="status" value="NOT_ANNOTATED_CDS"/>
    <property type="molecule type" value="Genomic_DNA"/>
</dbReference>
<dbReference type="EMBL" id="CH471105">
    <property type="protein sequence ID" value="EAW58915.1"/>
    <property type="molecule type" value="Genomic_DNA"/>
</dbReference>
<dbReference type="EMBL" id="D85241">
    <property type="protein sequence ID" value="BAA28608.1"/>
    <property type="molecule type" value="mRNA"/>
</dbReference>
<dbReference type="EMBL" id="D85242">
    <property type="protein sequence ID" value="BAA31221.1"/>
    <property type="molecule type" value="mRNA"/>
</dbReference>
<dbReference type="CCDS" id="CCDS6742.1">
    <molecule id="Q92570-3"/>
</dbReference>
<dbReference type="CCDS" id="CCDS6743.1">
    <molecule id="Q92570-1"/>
</dbReference>
<dbReference type="CCDS" id="CCDS6744.1">
    <molecule id="Q92570-2"/>
</dbReference>
<dbReference type="PIR" id="S71930">
    <property type="entry name" value="S71930"/>
</dbReference>
<dbReference type="RefSeq" id="NP_008912.2">
    <molecule id="Q92570-1"/>
    <property type="nucleotide sequence ID" value="NM_006981.3"/>
</dbReference>
<dbReference type="RefSeq" id="NP_775291.1">
    <molecule id="Q92570-2"/>
    <property type="nucleotide sequence ID" value="NM_173199.4"/>
</dbReference>
<dbReference type="RefSeq" id="NP_775292.1">
    <molecule id="Q92570-3"/>
    <property type="nucleotide sequence ID" value="NM_173200.3"/>
</dbReference>
<dbReference type="RefSeq" id="XP_016870651.1">
    <molecule id="Q92570-1"/>
    <property type="nucleotide sequence ID" value="XM_017015162.2"/>
</dbReference>
<dbReference type="PDB" id="8XTT">
    <property type="method" value="NMR"/>
    <property type="chains" value="A=379-626"/>
</dbReference>
<dbReference type="PDBsum" id="8XTT"/>
<dbReference type="SMR" id="Q92570"/>
<dbReference type="BioGRID" id="113713">
    <property type="interactions" value="46"/>
</dbReference>
<dbReference type="CORUM" id="Q92570"/>
<dbReference type="FunCoup" id="Q92570">
    <property type="interactions" value="1042"/>
</dbReference>
<dbReference type="IntAct" id="Q92570">
    <property type="interactions" value="39"/>
</dbReference>
<dbReference type="MINT" id="Q92570"/>
<dbReference type="STRING" id="9606.ENSP00000482027"/>
<dbReference type="BindingDB" id="Q92570"/>
<dbReference type="ChEMBL" id="CHEMBL1961792"/>
<dbReference type="DrugBank" id="DB01254">
    <property type="generic name" value="Dasatinib"/>
</dbReference>
<dbReference type="DrugCentral" id="Q92570"/>
<dbReference type="GuidetoPHARMACOLOGY" id="631"/>
<dbReference type="GlyGen" id="Q92570">
    <property type="glycosylation" value="6 sites, 1 O-linked glycan (5 sites)"/>
</dbReference>
<dbReference type="iPTMnet" id="Q92570"/>
<dbReference type="PhosphoSitePlus" id="Q92570"/>
<dbReference type="BioMuta" id="NR4A3"/>
<dbReference type="DMDM" id="90110039"/>
<dbReference type="jPOST" id="Q92570"/>
<dbReference type="MassIVE" id="Q92570"/>
<dbReference type="PaxDb" id="9606-ENSP00000482027"/>
<dbReference type="PeptideAtlas" id="Q92570"/>
<dbReference type="ProteomicsDB" id="75330">
    <molecule id="Q92570-1"/>
</dbReference>
<dbReference type="ProteomicsDB" id="75331">
    <molecule id="Q92570-2"/>
</dbReference>
<dbReference type="ProteomicsDB" id="75332">
    <molecule id="Q92570-3"/>
</dbReference>
<dbReference type="Antibodypedia" id="29057">
    <property type="antibodies" value="426 antibodies from 31 providers"/>
</dbReference>
<dbReference type="DNASU" id="8013"/>
<dbReference type="Ensembl" id="ENST00000330847.1">
    <molecule id="Q92570-3"/>
    <property type="protein sequence ID" value="ENSP00000333122.1"/>
    <property type="gene ID" value="ENSG00000119508.18"/>
</dbReference>
<dbReference type="Ensembl" id="ENST00000338488.8">
    <molecule id="Q92570-2"/>
    <property type="protein sequence ID" value="ENSP00000340301.4"/>
    <property type="gene ID" value="ENSG00000119508.18"/>
</dbReference>
<dbReference type="Ensembl" id="ENST00000395097.7">
    <molecule id="Q92570-1"/>
    <property type="protein sequence ID" value="ENSP00000378531.2"/>
    <property type="gene ID" value="ENSG00000119508.18"/>
</dbReference>
<dbReference type="Ensembl" id="ENST00000618101.4">
    <molecule id="Q92570-3"/>
    <property type="protein sequence ID" value="ENSP00000482027.1"/>
    <property type="gene ID" value="ENSG00000119508.18"/>
</dbReference>
<dbReference type="GeneID" id="8013"/>
<dbReference type="KEGG" id="hsa:8013"/>
<dbReference type="MANE-Select" id="ENST00000395097.7">
    <property type="protein sequence ID" value="ENSP00000378531.2"/>
    <property type="RefSeq nucleotide sequence ID" value="NM_006981.4"/>
    <property type="RefSeq protein sequence ID" value="NP_008912.2"/>
</dbReference>
<dbReference type="UCSC" id="uc004bae.3">
    <molecule id="Q92570-1"/>
    <property type="organism name" value="human"/>
</dbReference>
<dbReference type="AGR" id="HGNC:7982"/>
<dbReference type="CTD" id="8013"/>
<dbReference type="DisGeNET" id="8013"/>
<dbReference type="GeneCards" id="NR4A3"/>
<dbReference type="HGNC" id="HGNC:7982">
    <property type="gene designation" value="NR4A3"/>
</dbReference>
<dbReference type="HPA" id="ENSG00000119508">
    <property type="expression patterns" value="Low tissue specificity"/>
</dbReference>
<dbReference type="MalaCards" id="NR4A3"/>
<dbReference type="MIM" id="600542">
    <property type="type" value="gene+phenotype"/>
</dbReference>
<dbReference type="MIM" id="612219">
    <property type="type" value="phenotype"/>
</dbReference>
<dbReference type="neXtProt" id="NX_Q92570"/>
<dbReference type="OpenTargets" id="ENSG00000119508"/>
<dbReference type="Orphanet" id="209916">
    <property type="disease" value="Extraskeletal myxoid chondrosarcoma"/>
</dbReference>
<dbReference type="PharmGKB" id="PA31763"/>
<dbReference type="VEuPathDB" id="HostDB:ENSG00000119508"/>
<dbReference type="eggNOG" id="KOG4217">
    <property type="taxonomic scope" value="Eukaryota"/>
</dbReference>
<dbReference type="GeneTree" id="ENSGT00950000183038"/>
<dbReference type="HOGENOM" id="CLU_007368_14_2_1"/>
<dbReference type="InParanoid" id="Q92570"/>
<dbReference type="OMA" id="DFIPYTH"/>
<dbReference type="OrthoDB" id="5952118at2759"/>
<dbReference type="PAN-GO" id="Q92570">
    <property type="GO annotations" value="7 GO annotations based on evolutionary models"/>
</dbReference>
<dbReference type="PhylomeDB" id="Q92570"/>
<dbReference type="TreeFam" id="TF315430"/>
<dbReference type="PathwayCommons" id="Q92570"/>
<dbReference type="Reactome" id="R-HSA-383280">
    <property type="pathway name" value="Nuclear Receptor transcription pathway"/>
</dbReference>
<dbReference type="Reactome" id="R-HSA-8936459">
    <property type="pathway name" value="RUNX1 regulates genes involved in megakaryocyte differentiation and platelet function"/>
</dbReference>
<dbReference type="SignaLink" id="Q92570"/>
<dbReference type="SIGNOR" id="Q92570"/>
<dbReference type="BioGRID-ORCS" id="8013">
    <property type="hits" value="11 hits in 1181 CRISPR screens"/>
</dbReference>
<dbReference type="ChiTaRS" id="NR4A3">
    <property type="organism name" value="human"/>
</dbReference>
<dbReference type="GeneWiki" id="Neuron-derived_orphan_receptor_1"/>
<dbReference type="GenomeRNAi" id="8013"/>
<dbReference type="Pharos" id="Q92570">
    <property type="development level" value="Tchem"/>
</dbReference>
<dbReference type="PRO" id="PR:Q92570"/>
<dbReference type="Proteomes" id="UP000005640">
    <property type="component" value="Chromosome 9"/>
</dbReference>
<dbReference type="RNAct" id="Q92570">
    <property type="molecule type" value="protein"/>
</dbReference>
<dbReference type="Bgee" id="ENSG00000119508">
    <property type="expression patterns" value="Expressed in mucosa of paranasal sinus and 181 other cell types or tissues"/>
</dbReference>
<dbReference type="ExpressionAtlas" id="Q92570">
    <property type="expression patterns" value="baseline and differential"/>
</dbReference>
<dbReference type="GO" id="GO:0000785">
    <property type="term" value="C:chromatin"/>
    <property type="evidence" value="ECO:0000247"/>
    <property type="project" value="NTNU_SB"/>
</dbReference>
<dbReference type="GO" id="GO:0005654">
    <property type="term" value="C:nucleoplasm"/>
    <property type="evidence" value="ECO:0000304"/>
    <property type="project" value="Reactome"/>
</dbReference>
<dbReference type="GO" id="GO:0005634">
    <property type="term" value="C:nucleus"/>
    <property type="evidence" value="ECO:0000318"/>
    <property type="project" value="GO_Central"/>
</dbReference>
<dbReference type="GO" id="GO:0005667">
    <property type="term" value="C:transcription regulator complex"/>
    <property type="evidence" value="ECO:0000318"/>
    <property type="project" value="GO_Central"/>
</dbReference>
<dbReference type="GO" id="GO:0035497">
    <property type="term" value="F:cAMP response element binding"/>
    <property type="evidence" value="ECO:0000250"/>
    <property type="project" value="UniProtKB"/>
</dbReference>
<dbReference type="GO" id="GO:0003677">
    <property type="term" value="F:DNA binding"/>
    <property type="evidence" value="ECO:0000303"/>
    <property type="project" value="UniProtKB"/>
</dbReference>
<dbReference type="GO" id="GO:0001228">
    <property type="term" value="F:DNA-binding transcription activator activity, RNA polymerase II-specific"/>
    <property type="evidence" value="ECO:0000314"/>
    <property type="project" value="UniProtKB"/>
</dbReference>
<dbReference type="GO" id="GO:0000981">
    <property type="term" value="F:DNA-binding transcription factor activity, RNA polymerase II-specific"/>
    <property type="evidence" value="ECO:0000247"/>
    <property type="project" value="NTNU_SB"/>
</dbReference>
<dbReference type="GO" id="GO:0035035">
    <property type="term" value="F:histone acetyltransferase binding"/>
    <property type="evidence" value="ECO:0007669"/>
    <property type="project" value="Ensembl"/>
</dbReference>
<dbReference type="GO" id="GO:0035259">
    <property type="term" value="F:nuclear glucocorticoid receptor binding"/>
    <property type="evidence" value="ECO:0000318"/>
    <property type="project" value="GO_Central"/>
</dbReference>
<dbReference type="GO" id="GO:0004879">
    <property type="term" value="F:nuclear receptor activity"/>
    <property type="evidence" value="ECO:0000304"/>
    <property type="project" value="ProtInc"/>
</dbReference>
<dbReference type="GO" id="GO:0003707">
    <property type="term" value="F:nuclear steroid receptor activity"/>
    <property type="evidence" value="ECO:0000304"/>
    <property type="project" value="ProtInc"/>
</dbReference>
<dbReference type="GO" id="GO:0042803">
    <property type="term" value="F:protein homodimerization activity"/>
    <property type="evidence" value="ECO:0000250"/>
    <property type="project" value="UniProtKB"/>
</dbReference>
<dbReference type="GO" id="GO:0019901">
    <property type="term" value="F:protein kinase binding"/>
    <property type="evidence" value="ECO:0000353"/>
    <property type="project" value="UniProtKB"/>
</dbReference>
<dbReference type="GO" id="GO:0000978">
    <property type="term" value="F:RNA polymerase II cis-regulatory region sequence-specific DNA binding"/>
    <property type="evidence" value="ECO:0000318"/>
    <property type="project" value="GO_Central"/>
</dbReference>
<dbReference type="GO" id="GO:0001223">
    <property type="term" value="F:transcription coactivator binding"/>
    <property type="evidence" value="ECO:0007669"/>
    <property type="project" value="Ensembl"/>
</dbReference>
<dbReference type="GO" id="GO:0008270">
    <property type="term" value="F:zinc ion binding"/>
    <property type="evidence" value="ECO:0007669"/>
    <property type="project" value="UniProtKB-KW"/>
</dbReference>
<dbReference type="GO" id="GO:0030534">
    <property type="term" value="P:adult behavior"/>
    <property type="evidence" value="ECO:0007669"/>
    <property type="project" value="Ensembl"/>
</dbReference>
<dbReference type="GO" id="GO:0007411">
    <property type="term" value="P:axon guidance"/>
    <property type="evidence" value="ECO:0007669"/>
    <property type="project" value="Ensembl"/>
</dbReference>
<dbReference type="GO" id="GO:0045333">
    <property type="term" value="P:cellular respiration"/>
    <property type="evidence" value="ECO:0000250"/>
    <property type="project" value="UniProtKB"/>
</dbReference>
<dbReference type="GO" id="GO:0071870">
    <property type="term" value="P:cellular response to catecholamine stimulus"/>
    <property type="evidence" value="ECO:0000250"/>
    <property type="project" value="UniProtKB"/>
</dbReference>
<dbReference type="GO" id="GO:0071376">
    <property type="term" value="P:cellular response to corticotropin-releasing hormone stimulus"/>
    <property type="evidence" value="ECO:0000250"/>
    <property type="project" value="UniProtKB"/>
</dbReference>
<dbReference type="GO" id="GO:0044320">
    <property type="term" value="P:cellular response to leptin stimulus"/>
    <property type="evidence" value="ECO:0000250"/>
    <property type="project" value="UniProtKB"/>
</dbReference>
<dbReference type="GO" id="GO:0035726">
    <property type="term" value="P:common myeloid progenitor cell proliferation"/>
    <property type="evidence" value="ECO:0000250"/>
    <property type="project" value="UniProtKB"/>
</dbReference>
<dbReference type="GO" id="GO:0097048">
    <property type="term" value="P:dendritic cell apoptotic process"/>
    <property type="evidence" value="ECO:0007669"/>
    <property type="project" value="Ensembl"/>
</dbReference>
<dbReference type="GO" id="GO:0097009">
    <property type="term" value="P:energy homeostasis"/>
    <property type="evidence" value="ECO:0000250"/>
    <property type="project" value="UniProtKB"/>
</dbReference>
<dbReference type="GO" id="GO:0045444">
    <property type="term" value="P:fat cell differentiation"/>
    <property type="evidence" value="ECO:0000250"/>
    <property type="project" value="UniProtKB"/>
</dbReference>
<dbReference type="GO" id="GO:0007369">
    <property type="term" value="P:gastrulation"/>
    <property type="evidence" value="ECO:0000250"/>
    <property type="project" value="UniProtKB"/>
</dbReference>
<dbReference type="GO" id="GO:0021766">
    <property type="term" value="P:hippocampus development"/>
    <property type="evidence" value="ECO:0007669"/>
    <property type="project" value="Ensembl"/>
</dbReference>
<dbReference type="GO" id="GO:0035556">
    <property type="term" value="P:intracellular signal transduction"/>
    <property type="evidence" value="ECO:0000250"/>
    <property type="project" value="UniProtKB"/>
</dbReference>
<dbReference type="GO" id="GO:0043303">
    <property type="term" value="P:mast cell degranulation"/>
    <property type="evidence" value="ECO:0000250"/>
    <property type="project" value="UniProtKB"/>
</dbReference>
<dbReference type="GO" id="GO:0001707">
    <property type="term" value="P:mesoderm formation"/>
    <property type="evidence" value="ECO:0007669"/>
    <property type="project" value="Ensembl"/>
</dbReference>
<dbReference type="GO" id="GO:0043524">
    <property type="term" value="P:negative regulation of neuron apoptotic process"/>
    <property type="evidence" value="ECO:0007669"/>
    <property type="project" value="Ensembl"/>
</dbReference>
<dbReference type="GO" id="GO:0034392">
    <property type="term" value="P:negative regulation of smooth muscle cell apoptotic process"/>
    <property type="evidence" value="ECO:0007669"/>
    <property type="project" value="Ensembl"/>
</dbReference>
<dbReference type="GO" id="GO:0000122">
    <property type="term" value="P:negative regulation of transcription by RNA polymerase II"/>
    <property type="evidence" value="ECO:0000250"/>
    <property type="project" value="UniProtKB"/>
</dbReference>
<dbReference type="GO" id="GO:0050885">
    <property type="term" value="P:neuromuscular process controlling balance"/>
    <property type="evidence" value="ECO:0007669"/>
    <property type="project" value="Ensembl"/>
</dbReference>
<dbReference type="GO" id="GO:0051402">
    <property type="term" value="P:neuron apoptotic process"/>
    <property type="evidence" value="ECO:0007669"/>
    <property type="project" value="Ensembl"/>
</dbReference>
<dbReference type="GO" id="GO:0048008">
    <property type="term" value="P:platelet-derived growth factor receptor signaling pathway"/>
    <property type="evidence" value="ECO:0000314"/>
    <property type="project" value="BHF-UCL"/>
</dbReference>
<dbReference type="GO" id="GO:0010613">
    <property type="term" value="P:positive regulation of cardiac muscle hypertrophy"/>
    <property type="evidence" value="ECO:0000250"/>
    <property type="project" value="UniProtKB"/>
</dbReference>
<dbReference type="GO" id="GO:0045787">
    <property type="term" value="P:positive regulation of cell cycle"/>
    <property type="evidence" value="ECO:0007669"/>
    <property type="project" value="Ensembl"/>
</dbReference>
<dbReference type="GO" id="GO:0010828">
    <property type="term" value="P:positive regulation of D-glucose transmembrane transport"/>
    <property type="evidence" value="ECO:0000314"/>
    <property type="project" value="UniProtKB"/>
</dbReference>
<dbReference type="GO" id="GO:2000670">
    <property type="term" value="P:positive regulation of dendritic cell apoptotic process"/>
    <property type="evidence" value="ECO:0007669"/>
    <property type="project" value="Ensembl"/>
</dbReference>
<dbReference type="GO" id="GO:0050679">
    <property type="term" value="P:positive regulation of epithelial cell proliferation"/>
    <property type="evidence" value="ECO:0000250"/>
    <property type="project" value="UniProtKB"/>
</dbReference>
<dbReference type="GO" id="GO:2000253">
    <property type="term" value="P:positive regulation of feeding behavior"/>
    <property type="evidence" value="ECO:0000250"/>
    <property type="project" value="UniProtKB"/>
</dbReference>
<dbReference type="GO" id="GO:0038097">
    <property type="term" value="P:positive regulation of mast cell activation by Fc-epsilon receptor signaling pathway"/>
    <property type="evidence" value="ECO:0000250"/>
    <property type="project" value="UniProtKB"/>
</dbReference>
<dbReference type="GO" id="GO:0032765">
    <property type="term" value="P:positive regulation of mast cell cytokine production"/>
    <property type="evidence" value="ECO:0000250"/>
    <property type="project" value="UniProtKB"/>
</dbReference>
<dbReference type="GO" id="GO:1900625">
    <property type="term" value="P:positive regulation of monocyte aggregation"/>
    <property type="evidence" value="ECO:0000315"/>
    <property type="project" value="UniProtKB"/>
</dbReference>
<dbReference type="GO" id="GO:0048661">
    <property type="term" value="P:positive regulation of smooth muscle cell proliferation"/>
    <property type="evidence" value="ECO:0000250"/>
    <property type="project" value="UniProtKB"/>
</dbReference>
<dbReference type="GO" id="GO:0045944">
    <property type="term" value="P:positive regulation of transcription by RNA polymerase II"/>
    <property type="evidence" value="ECO:0000314"/>
    <property type="project" value="UniProtKB"/>
</dbReference>
<dbReference type="GO" id="GO:1904754">
    <property type="term" value="P:positive regulation of vascular associated smooth muscle cell migration"/>
    <property type="evidence" value="ECO:0000316"/>
    <property type="project" value="BHF-UCL"/>
</dbReference>
<dbReference type="GO" id="GO:1904707">
    <property type="term" value="P:positive regulation of vascular associated smooth muscle cell proliferation"/>
    <property type="evidence" value="ECO:0000316"/>
    <property type="project" value="BHF-UCL"/>
</dbReference>
<dbReference type="GO" id="GO:0048660">
    <property type="term" value="P:regulation of smooth muscle cell proliferation"/>
    <property type="evidence" value="ECO:0000314"/>
    <property type="project" value="UniProtKB"/>
</dbReference>
<dbReference type="GO" id="GO:0006357">
    <property type="term" value="P:regulation of transcription by RNA polymerase II"/>
    <property type="evidence" value="ECO:0000318"/>
    <property type="project" value="GO_Central"/>
</dbReference>
<dbReference type="GO" id="GO:0061469">
    <property type="term" value="P:regulation of type B pancreatic cell proliferation"/>
    <property type="evidence" value="ECO:0000250"/>
    <property type="project" value="UniProtKB"/>
</dbReference>
<dbReference type="GO" id="GO:0042542">
    <property type="term" value="P:response to hydrogen peroxide"/>
    <property type="evidence" value="ECO:0007669"/>
    <property type="project" value="Ensembl"/>
</dbReference>
<dbReference type="GO" id="GO:0048752">
    <property type="term" value="P:semicircular canal morphogenesis"/>
    <property type="evidence" value="ECO:0007669"/>
    <property type="project" value="Ensembl"/>
</dbReference>
<dbReference type="GO" id="GO:0034390">
    <property type="term" value="P:smooth muscle cell apoptotic process"/>
    <property type="evidence" value="ECO:0007669"/>
    <property type="project" value="Ensembl"/>
</dbReference>
<dbReference type="GO" id="GO:0060005">
    <property type="term" value="P:vestibular reflex"/>
    <property type="evidence" value="ECO:0007669"/>
    <property type="project" value="Ensembl"/>
</dbReference>
<dbReference type="CDD" id="cd06969">
    <property type="entry name" value="NR_DBD_NGFI-B"/>
    <property type="match status" value="1"/>
</dbReference>
<dbReference type="FunFam" id="3.30.50.10:FF:000009">
    <property type="entry name" value="nuclear receptor subfamily 4 group A member 2"/>
    <property type="match status" value="1"/>
</dbReference>
<dbReference type="Gene3D" id="3.30.50.10">
    <property type="entry name" value="Erythroid Transcription Factor GATA-1, subunit A"/>
    <property type="match status" value="1"/>
</dbReference>
<dbReference type="Gene3D" id="1.10.565.10">
    <property type="entry name" value="Retinoid X Receptor"/>
    <property type="match status" value="1"/>
</dbReference>
<dbReference type="InterPro" id="IPR035500">
    <property type="entry name" value="NHR-like_dom_sf"/>
</dbReference>
<dbReference type="InterPro" id="IPR003070">
    <property type="entry name" value="NR4A1-3"/>
</dbReference>
<dbReference type="InterPro" id="IPR003072">
    <property type="entry name" value="NR4A3"/>
</dbReference>
<dbReference type="InterPro" id="IPR000536">
    <property type="entry name" value="Nucl_hrmn_rcpt_lig-bd"/>
</dbReference>
<dbReference type="InterPro" id="IPR001723">
    <property type="entry name" value="Nuclear_hrmn_rcpt"/>
</dbReference>
<dbReference type="InterPro" id="IPR001628">
    <property type="entry name" value="Znf_hrmn_rcpt"/>
</dbReference>
<dbReference type="InterPro" id="IPR013088">
    <property type="entry name" value="Znf_NHR/GATA"/>
</dbReference>
<dbReference type="PANTHER" id="PTHR24085">
    <property type="entry name" value="NUCLEAR HORMONE RECEPTOR"/>
    <property type="match status" value="1"/>
</dbReference>
<dbReference type="PANTHER" id="PTHR24085:SF2">
    <property type="entry name" value="NUCLEAR RECEPTOR SUBFAMILY 4 GROUP A MEMBER 3"/>
    <property type="match status" value="1"/>
</dbReference>
<dbReference type="Pfam" id="PF00104">
    <property type="entry name" value="Hormone_recep"/>
    <property type="match status" value="1"/>
</dbReference>
<dbReference type="Pfam" id="PF00105">
    <property type="entry name" value="zf-C4"/>
    <property type="match status" value="1"/>
</dbReference>
<dbReference type="PRINTS" id="PR01286">
    <property type="entry name" value="NORNUCRECPTR"/>
</dbReference>
<dbReference type="PRINTS" id="PR01284">
    <property type="entry name" value="NUCLEARECPTR"/>
</dbReference>
<dbReference type="PRINTS" id="PR00398">
    <property type="entry name" value="STRDHORMONER"/>
</dbReference>
<dbReference type="PRINTS" id="PR00047">
    <property type="entry name" value="STROIDFINGER"/>
</dbReference>
<dbReference type="SMART" id="SM00430">
    <property type="entry name" value="HOLI"/>
    <property type="match status" value="1"/>
</dbReference>
<dbReference type="SMART" id="SM00399">
    <property type="entry name" value="ZnF_C4"/>
    <property type="match status" value="1"/>
</dbReference>
<dbReference type="SUPFAM" id="SSF57716">
    <property type="entry name" value="Glucocorticoid receptor-like (DNA-binding domain)"/>
    <property type="match status" value="1"/>
</dbReference>
<dbReference type="SUPFAM" id="SSF48508">
    <property type="entry name" value="Nuclear receptor ligand-binding domain"/>
    <property type="match status" value="1"/>
</dbReference>
<dbReference type="PROSITE" id="PS51843">
    <property type="entry name" value="NR_LBD"/>
    <property type="match status" value="1"/>
</dbReference>
<dbReference type="PROSITE" id="PS00031">
    <property type="entry name" value="NUCLEAR_REC_DBD_1"/>
    <property type="match status" value="1"/>
</dbReference>
<dbReference type="PROSITE" id="PS51030">
    <property type="entry name" value="NUCLEAR_REC_DBD_2"/>
    <property type="match status" value="1"/>
</dbReference>
<name>NR4A3_HUMAN</name>